<keyword id="KW-0687">Ribonucleoprotein</keyword>
<keyword id="KW-0689">Ribosomal protein</keyword>
<dbReference type="EMBL" id="CP001132">
    <property type="protein sequence ID" value="ACH82743.1"/>
    <property type="molecule type" value="Genomic_DNA"/>
</dbReference>
<dbReference type="RefSeq" id="WP_009568779.1">
    <property type="nucleotide sequence ID" value="NC_011206.1"/>
</dbReference>
<dbReference type="SMR" id="B5ELX1"/>
<dbReference type="GeneID" id="65279698"/>
<dbReference type="KEGG" id="afe:Lferr_0489"/>
<dbReference type="eggNOG" id="COG0222">
    <property type="taxonomic scope" value="Bacteria"/>
</dbReference>
<dbReference type="HOGENOM" id="CLU_086499_3_2_6"/>
<dbReference type="GO" id="GO:0022625">
    <property type="term" value="C:cytosolic large ribosomal subunit"/>
    <property type="evidence" value="ECO:0007669"/>
    <property type="project" value="TreeGrafter"/>
</dbReference>
<dbReference type="GO" id="GO:0003729">
    <property type="term" value="F:mRNA binding"/>
    <property type="evidence" value="ECO:0007669"/>
    <property type="project" value="TreeGrafter"/>
</dbReference>
<dbReference type="GO" id="GO:0003735">
    <property type="term" value="F:structural constituent of ribosome"/>
    <property type="evidence" value="ECO:0007669"/>
    <property type="project" value="InterPro"/>
</dbReference>
<dbReference type="GO" id="GO:0006412">
    <property type="term" value="P:translation"/>
    <property type="evidence" value="ECO:0007669"/>
    <property type="project" value="UniProtKB-UniRule"/>
</dbReference>
<dbReference type="CDD" id="cd00387">
    <property type="entry name" value="Ribosomal_L7_L12"/>
    <property type="match status" value="1"/>
</dbReference>
<dbReference type="FunFam" id="3.30.1390.10:FF:000001">
    <property type="entry name" value="50S ribosomal protein L7/L12"/>
    <property type="match status" value="1"/>
</dbReference>
<dbReference type="Gene3D" id="3.30.1390.10">
    <property type="match status" value="1"/>
</dbReference>
<dbReference type="Gene3D" id="1.20.5.710">
    <property type="entry name" value="Single helix bin"/>
    <property type="match status" value="1"/>
</dbReference>
<dbReference type="HAMAP" id="MF_00368">
    <property type="entry name" value="Ribosomal_bL12"/>
    <property type="match status" value="1"/>
</dbReference>
<dbReference type="InterPro" id="IPR000206">
    <property type="entry name" value="Ribosomal_bL12"/>
</dbReference>
<dbReference type="InterPro" id="IPR013823">
    <property type="entry name" value="Ribosomal_bL12_C"/>
</dbReference>
<dbReference type="InterPro" id="IPR014719">
    <property type="entry name" value="Ribosomal_bL12_C/ClpS-like"/>
</dbReference>
<dbReference type="InterPro" id="IPR008932">
    <property type="entry name" value="Ribosomal_bL12_oligo"/>
</dbReference>
<dbReference type="InterPro" id="IPR036235">
    <property type="entry name" value="Ribosomal_bL12_oligo_N_sf"/>
</dbReference>
<dbReference type="NCBIfam" id="TIGR00855">
    <property type="entry name" value="L12"/>
    <property type="match status" value="1"/>
</dbReference>
<dbReference type="PANTHER" id="PTHR45987">
    <property type="entry name" value="39S RIBOSOMAL PROTEIN L12"/>
    <property type="match status" value="1"/>
</dbReference>
<dbReference type="PANTHER" id="PTHR45987:SF4">
    <property type="entry name" value="LARGE RIBOSOMAL SUBUNIT PROTEIN BL12M"/>
    <property type="match status" value="1"/>
</dbReference>
<dbReference type="Pfam" id="PF00542">
    <property type="entry name" value="Ribosomal_L12"/>
    <property type="match status" value="1"/>
</dbReference>
<dbReference type="Pfam" id="PF16320">
    <property type="entry name" value="Ribosomal_L12_N"/>
    <property type="match status" value="1"/>
</dbReference>
<dbReference type="SUPFAM" id="SSF54736">
    <property type="entry name" value="ClpS-like"/>
    <property type="match status" value="1"/>
</dbReference>
<dbReference type="SUPFAM" id="SSF48300">
    <property type="entry name" value="Ribosomal protein L7/12, oligomerisation (N-terminal) domain"/>
    <property type="match status" value="1"/>
</dbReference>
<name>RL7_ACIF5</name>
<evidence type="ECO:0000255" key="1">
    <source>
        <dbReference type="HAMAP-Rule" id="MF_00368"/>
    </source>
</evidence>
<evidence type="ECO:0000305" key="2"/>
<proteinExistence type="inferred from homology"/>
<accession>B5ELX1</accession>
<comment type="function">
    <text evidence="1">Forms part of the ribosomal stalk which helps the ribosome interact with GTP-bound translation factors. Is thus essential for accurate translation.</text>
</comment>
<comment type="subunit">
    <text evidence="1">Homodimer. Part of the ribosomal stalk of the 50S ribosomal subunit. Forms a multimeric L10(L12)X complex, where L10 forms an elongated spine to which 2 to 4 L12 dimers bind in a sequential fashion. Binds GTP-bound translation factors.</text>
</comment>
<comment type="similarity">
    <text evidence="1">Belongs to the bacterial ribosomal protein bL12 family.</text>
</comment>
<gene>
    <name evidence="1" type="primary">rplL</name>
    <name type="ordered locus">Lferr_0489</name>
</gene>
<protein>
    <recommendedName>
        <fullName evidence="1">Large ribosomal subunit protein bL12</fullName>
    </recommendedName>
    <alternativeName>
        <fullName evidence="2">50S ribosomal protein L7/L12</fullName>
    </alternativeName>
</protein>
<organism>
    <name type="scientific">Acidithiobacillus ferrooxidans (strain ATCC 53993 / BNL-5-31)</name>
    <name type="common">Leptospirillum ferrooxidans (ATCC 53993)</name>
    <dbReference type="NCBI Taxonomy" id="380394"/>
    <lineage>
        <taxon>Bacteria</taxon>
        <taxon>Pseudomonadati</taxon>
        <taxon>Pseudomonadota</taxon>
        <taxon>Acidithiobacillia</taxon>
        <taxon>Acidithiobacillales</taxon>
        <taxon>Acidithiobacillaceae</taxon>
        <taxon>Acidithiobacillus</taxon>
    </lineage>
</organism>
<sequence>MALSKAEILDAIAGMTVLELSELIKEMEEKFGVSAAAVAVAAPAGGAAAGEGAAAVEEQTEFDVILTAAGANKVNTIKVVRAITGLGLKEAKDLVDGAPKPVKEGVAKAEAESVKAQLVEAGAEAEIK</sequence>
<reference key="1">
    <citation type="submission" date="2008-08" db="EMBL/GenBank/DDBJ databases">
        <title>Complete sequence of Acidithiobacillus ferrooxidans ATCC 53993.</title>
        <authorList>
            <person name="Lucas S."/>
            <person name="Copeland A."/>
            <person name="Lapidus A."/>
            <person name="Glavina del Rio T."/>
            <person name="Dalin E."/>
            <person name="Tice H."/>
            <person name="Bruce D."/>
            <person name="Goodwin L."/>
            <person name="Pitluck S."/>
            <person name="Sims D."/>
            <person name="Brettin T."/>
            <person name="Detter J.C."/>
            <person name="Han C."/>
            <person name="Kuske C.R."/>
            <person name="Larimer F."/>
            <person name="Land M."/>
            <person name="Hauser L."/>
            <person name="Kyrpides N."/>
            <person name="Lykidis A."/>
            <person name="Borole A.P."/>
        </authorList>
    </citation>
    <scope>NUCLEOTIDE SEQUENCE [LARGE SCALE GENOMIC DNA]</scope>
    <source>
        <strain>ATCC 53993 / BNL-5-31</strain>
    </source>
</reference>
<feature type="chain" id="PRO_1000121380" description="Large ribosomal subunit protein bL12">
    <location>
        <begin position="1"/>
        <end position="128"/>
    </location>
</feature>